<organism>
    <name type="scientific">Streptococcus agalactiae serotype III (strain NEM316)</name>
    <dbReference type="NCBI Taxonomy" id="211110"/>
    <lineage>
        <taxon>Bacteria</taxon>
        <taxon>Bacillati</taxon>
        <taxon>Bacillota</taxon>
        <taxon>Bacilli</taxon>
        <taxon>Lactobacillales</taxon>
        <taxon>Streptococcaceae</taxon>
        <taxon>Streptococcus</taxon>
    </lineage>
</organism>
<accession>Q8E5E3</accession>
<feature type="chain" id="PRO_0000199384" description="Formate--tetrahydrofolate ligase">
    <location>
        <begin position="1"/>
        <end position="556"/>
    </location>
</feature>
<feature type="binding site" evidence="1">
    <location>
        <begin position="65"/>
        <end position="72"/>
    </location>
    <ligand>
        <name>ATP</name>
        <dbReference type="ChEBI" id="CHEBI:30616"/>
    </ligand>
</feature>
<reference key="1">
    <citation type="journal article" date="2002" name="Mol. Microbiol.">
        <title>Genome sequence of Streptococcus agalactiae, a pathogen causing invasive neonatal disease.</title>
        <authorList>
            <person name="Glaser P."/>
            <person name="Rusniok C."/>
            <person name="Buchrieser C."/>
            <person name="Chevalier F."/>
            <person name="Frangeul L."/>
            <person name="Msadek T."/>
            <person name="Zouine M."/>
            <person name="Couve E."/>
            <person name="Lalioui L."/>
            <person name="Poyart C."/>
            <person name="Trieu-Cuot P."/>
            <person name="Kunst F."/>
        </authorList>
    </citation>
    <scope>NUCLEOTIDE SEQUENCE [LARGE SCALE GENOMIC DNA]</scope>
    <source>
        <strain>NEM316</strain>
    </source>
</reference>
<proteinExistence type="inferred from homology"/>
<sequence>MKTDIEIAQSVALKPIAEIVEQVGIGFDDIELYGKYKAKLSFDKIEAVRSQKVGKLILVTAINPTPAGEGKSTMSIGLADALNKIGKKTMIALREPSLGPVMGIKGGAAGGGYAQVLPMEDINLHFTGDMHAITTANNALSALLDNHIHQGNELDIDQRRVIWKRVVDLNDRALRQVIVGLGSSVNGIPREDGFDITVASEIMAILCLATDLSDLKKRLSNIVVAYSRDRKPIYVKDLKIEGALTLILKDAIKPNLVQTIYGTPALVHGGPFANIAHGCNSVLATSTALRLADYVVTEAGFGADLGAEKFLDIKTPNLPTSPDAIVIVATLRALKMHGGVSKEDLSQENVKAVKRGFTNLERHVNNMRQYGVPVVVAINQFTADTESEIATLKTLCSNIDVAVELASVWEDGADGGLELAQTVANVIETQSSNYKRLYNDEDTIEEKIKKIVTKIYGGNKVHFGPKAQIQLKEFSDNGWDKMPICMAKTQYSFSDNPNLLGAPTDFDITVREFVPKTGAGFIVALTGDVLTMPGLPKKPAALNMDVLEDGTAIGLF</sequence>
<gene>
    <name evidence="1" type="primary">fhs</name>
    <name type="ordered locus">gbs1089</name>
</gene>
<evidence type="ECO:0000255" key="1">
    <source>
        <dbReference type="HAMAP-Rule" id="MF_01543"/>
    </source>
</evidence>
<dbReference type="EC" id="6.3.4.3" evidence="1"/>
<dbReference type="EMBL" id="AL766848">
    <property type="protein sequence ID" value="CAD46748.1"/>
    <property type="molecule type" value="Genomic_DNA"/>
</dbReference>
<dbReference type="RefSeq" id="WP_000845316.1">
    <property type="nucleotide sequence ID" value="NC_004368.1"/>
</dbReference>
<dbReference type="SMR" id="Q8E5E3"/>
<dbReference type="KEGG" id="san:gbs1089"/>
<dbReference type="eggNOG" id="COG2759">
    <property type="taxonomic scope" value="Bacteria"/>
</dbReference>
<dbReference type="HOGENOM" id="CLU_003601_3_3_9"/>
<dbReference type="UniPathway" id="UPA00193"/>
<dbReference type="Proteomes" id="UP000000823">
    <property type="component" value="Chromosome"/>
</dbReference>
<dbReference type="GO" id="GO:0005524">
    <property type="term" value="F:ATP binding"/>
    <property type="evidence" value="ECO:0007669"/>
    <property type="project" value="UniProtKB-UniRule"/>
</dbReference>
<dbReference type="GO" id="GO:0004329">
    <property type="term" value="F:formate-tetrahydrofolate ligase activity"/>
    <property type="evidence" value="ECO:0007669"/>
    <property type="project" value="UniProtKB-UniRule"/>
</dbReference>
<dbReference type="GO" id="GO:0035999">
    <property type="term" value="P:tetrahydrofolate interconversion"/>
    <property type="evidence" value="ECO:0007669"/>
    <property type="project" value="UniProtKB-UniRule"/>
</dbReference>
<dbReference type="CDD" id="cd00477">
    <property type="entry name" value="FTHFS"/>
    <property type="match status" value="1"/>
</dbReference>
<dbReference type="FunFam" id="3.30.1510.10:FF:000001">
    <property type="entry name" value="Formate--tetrahydrofolate ligase"/>
    <property type="match status" value="1"/>
</dbReference>
<dbReference type="FunFam" id="3.10.410.10:FF:000001">
    <property type="entry name" value="Putative formate--tetrahydrofolate ligase"/>
    <property type="match status" value="1"/>
</dbReference>
<dbReference type="Gene3D" id="3.30.1510.10">
    <property type="entry name" value="Domain 2, N(10)-formyltetrahydrofolate synthetase"/>
    <property type="match status" value="1"/>
</dbReference>
<dbReference type="Gene3D" id="3.10.410.10">
    <property type="entry name" value="Formyltetrahydrofolate synthetase, domain 3"/>
    <property type="match status" value="1"/>
</dbReference>
<dbReference type="Gene3D" id="3.40.50.300">
    <property type="entry name" value="P-loop containing nucleotide triphosphate hydrolases"/>
    <property type="match status" value="1"/>
</dbReference>
<dbReference type="HAMAP" id="MF_01543">
    <property type="entry name" value="FTHFS"/>
    <property type="match status" value="1"/>
</dbReference>
<dbReference type="InterPro" id="IPR000559">
    <property type="entry name" value="Formate_THF_ligase"/>
</dbReference>
<dbReference type="InterPro" id="IPR020628">
    <property type="entry name" value="Formate_THF_ligase_CS"/>
</dbReference>
<dbReference type="InterPro" id="IPR027417">
    <property type="entry name" value="P-loop_NTPase"/>
</dbReference>
<dbReference type="NCBIfam" id="NF010030">
    <property type="entry name" value="PRK13505.1"/>
    <property type="match status" value="1"/>
</dbReference>
<dbReference type="Pfam" id="PF01268">
    <property type="entry name" value="FTHFS"/>
    <property type="match status" value="1"/>
</dbReference>
<dbReference type="SUPFAM" id="SSF52540">
    <property type="entry name" value="P-loop containing nucleoside triphosphate hydrolases"/>
    <property type="match status" value="1"/>
</dbReference>
<dbReference type="PROSITE" id="PS00721">
    <property type="entry name" value="FTHFS_1"/>
    <property type="match status" value="1"/>
</dbReference>
<dbReference type="PROSITE" id="PS00722">
    <property type="entry name" value="FTHFS_2"/>
    <property type="match status" value="1"/>
</dbReference>
<comment type="catalytic activity">
    <reaction evidence="1">
        <text>(6S)-5,6,7,8-tetrahydrofolate + formate + ATP = (6R)-10-formyltetrahydrofolate + ADP + phosphate</text>
        <dbReference type="Rhea" id="RHEA:20221"/>
        <dbReference type="ChEBI" id="CHEBI:15740"/>
        <dbReference type="ChEBI" id="CHEBI:30616"/>
        <dbReference type="ChEBI" id="CHEBI:43474"/>
        <dbReference type="ChEBI" id="CHEBI:57453"/>
        <dbReference type="ChEBI" id="CHEBI:195366"/>
        <dbReference type="ChEBI" id="CHEBI:456216"/>
        <dbReference type="EC" id="6.3.4.3"/>
    </reaction>
</comment>
<comment type="pathway">
    <text evidence="1">One-carbon metabolism; tetrahydrofolate interconversion.</text>
</comment>
<comment type="similarity">
    <text evidence="1">Belongs to the formate--tetrahydrofolate ligase family.</text>
</comment>
<keyword id="KW-0067">ATP-binding</keyword>
<keyword id="KW-0436">Ligase</keyword>
<keyword id="KW-0547">Nucleotide-binding</keyword>
<keyword id="KW-0554">One-carbon metabolism</keyword>
<name>FTHS_STRA3</name>
<protein>
    <recommendedName>
        <fullName evidence="1">Formate--tetrahydrofolate ligase</fullName>
        <ecNumber evidence="1">6.3.4.3</ecNumber>
    </recommendedName>
    <alternativeName>
        <fullName evidence="1">Formyltetrahydrofolate synthetase</fullName>
        <shortName evidence="1">FHS</shortName>
        <shortName evidence="1">FTHFS</shortName>
    </alternativeName>
</protein>